<keyword id="KW-0963">Cytoplasm</keyword>
<keyword id="KW-0570">Pentose shunt</keyword>
<keyword id="KW-0704">Schiff base</keyword>
<keyword id="KW-0808">Transferase</keyword>
<protein>
    <recommendedName>
        <fullName evidence="1">Transaldolase</fullName>
        <ecNumber evidence="1">2.2.1.2</ecNumber>
    </recommendedName>
</protein>
<comment type="function">
    <text evidence="1">Transaldolase is important for the balance of metabolites in the pentose-phosphate pathway.</text>
</comment>
<comment type="catalytic activity">
    <reaction evidence="1">
        <text>D-sedoheptulose 7-phosphate + D-glyceraldehyde 3-phosphate = D-erythrose 4-phosphate + beta-D-fructose 6-phosphate</text>
        <dbReference type="Rhea" id="RHEA:17053"/>
        <dbReference type="ChEBI" id="CHEBI:16897"/>
        <dbReference type="ChEBI" id="CHEBI:57483"/>
        <dbReference type="ChEBI" id="CHEBI:57634"/>
        <dbReference type="ChEBI" id="CHEBI:59776"/>
        <dbReference type="EC" id="2.2.1.2"/>
    </reaction>
</comment>
<comment type="pathway">
    <text evidence="1">Carbohydrate degradation; pentose phosphate pathway; D-glyceraldehyde 3-phosphate and beta-D-fructose 6-phosphate from D-ribose 5-phosphate and D-xylulose 5-phosphate (non-oxidative stage): step 2/3.</text>
</comment>
<comment type="subcellular location">
    <subcellularLocation>
        <location evidence="1">Cytoplasm</location>
    </subcellularLocation>
</comment>
<comment type="similarity">
    <text evidence="1 2">Belongs to the transaldolase family. Type 1 subfamily.</text>
</comment>
<feature type="chain" id="PRO_0000173578" description="Transaldolase">
    <location>
        <begin position="1"/>
        <end position="332"/>
    </location>
</feature>
<feature type="active site" description="Schiff-base intermediate with substrate" evidence="1">
    <location>
        <position position="136"/>
    </location>
</feature>
<feature type="sequence conflict" description="In Ref. 1; AAC41527." evidence="2" ref="1">
    <original>D</original>
    <variation>Y</variation>
    <location>
        <position position="204"/>
    </location>
</feature>
<feature type="sequence conflict" description="In Ref. 1; AAC41527." evidence="2" ref="1">
    <original>T</original>
    <variation>S</variation>
    <location>
        <position position="309"/>
    </location>
</feature>
<organism>
    <name type="scientific">Trichormus variabilis (strain ATCC 29413 / PCC 7937)</name>
    <name type="common">Anabaena variabilis</name>
    <dbReference type="NCBI Taxonomy" id="240292"/>
    <lineage>
        <taxon>Bacteria</taxon>
        <taxon>Bacillati</taxon>
        <taxon>Cyanobacteriota</taxon>
        <taxon>Cyanophyceae</taxon>
        <taxon>Nostocales</taxon>
        <taxon>Nostocaceae</taxon>
        <taxon>Trichormus</taxon>
    </lineage>
</organism>
<dbReference type="EC" id="2.2.1.2" evidence="1"/>
<dbReference type="EMBL" id="L47327">
    <property type="protein sequence ID" value="AAC41527.1"/>
    <property type="molecule type" value="Genomic_DNA"/>
</dbReference>
<dbReference type="EMBL" id="CP000117">
    <property type="protein sequence ID" value="ABA20117.1"/>
    <property type="molecule type" value="Genomic_DNA"/>
</dbReference>
<dbReference type="PIR" id="S72517">
    <property type="entry name" value="S72517"/>
</dbReference>
<dbReference type="SMR" id="P51778"/>
<dbReference type="STRING" id="240292.Ava_0493"/>
<dbReference type="KEGG" id="ava:Ava_0493"/>
<dbReference type="eggNOG" id="COG0176">
    <property type="taxonomic scope" value="Bacteria"/>
</dbReference>
<dbReference type="HOGENOM" id="CLU_047470_0_0_3"/>
<dbReference type="UniPathway" id="UPA00115">
    <property type="reaction ID" value="UER00414"/>
</dbReference>
<dbReference type="Proteomes" id="UP000002533">
    <property type="component" value="Chromosome"/>
</dbReference>
<dbReference type="GO" id="GO:0005737">
    <property type="term" value="C:cytoplasm"/>
    <property type="evidence" value="ECO:0007669"/>
    <property type="project" value="UniProtKB-SubCell"/>
</dbReference>
<dbReference type="GO" id="GO:0004801">
    <property type="term" value="F:transaldolase activity"/>
    <property type="evidence" value="ECO:0000250"/>
    <property type="project" value="UniProtKB"/>
</dbReference>
<dbReference type="GO" id="GO:0005975">
    <property type="term" value="P:carbohydrate metabolic process"/>
    <property type="evidence" value="ECO:0007669"/>
    <property type="project" value="InterPro"/>
</dbReference>
<dbReference type="GO" id="GO:0006098">
    <property type="term" value="P:pentose-phosphate shunt"/>
    <property type="evidence" value="ECO:0007669"/>
    <property type="project" value="UniProtKB-UniRule"/>
</dbReference>
<dbReference type="CDD" id="cd00957">
    <property type="entry name" value="Transaldolase_TalAB"/>
    <property type="match status" value="1"/>
</dbReference>
<dbReference type="FunFam" id="3.20.20.70:FF:000002">
    <property type="entry name" value="Transaldolase"/>
    <property type="match status" value="1"/>
</dbReference>
<dbReference type="Gene3D" id="3.20.20.70">
    <property type="entry name" value="Aldolase class I"/>
    <property type="match status" value="1"/>
</dbReference>
<dbReference type="HAMAP" id="MF_00492">
    <property type="entry name" value="Transaldolase_1"/>
    <property type="match status" value="1"/>
</dbReference>
<dbReference type="InterPro" id="IPR013785">
    <property type="entry name" value="Aldolase_TIM"/>
</dbReference>
<dbReference type="InterPro" id="IPR001585">
    <property type="entry name" value="TAL/FSA"/>
</dbReference>
<dbReference type="InterPro" id="IPR004730">
    <property type="entry name" value="Transaldolase_1"/>
</dbReference>
<dbReference type="InterPro" id="IPR018225">
    <property type="entry name" value="Transaldolase_AS"/>
</dbReference>
<dbReference type="NCBIfam" id="NF008965">
    <property type="entry name" value="PRK12309.1"/>
    <property type="match status" value="1"/>
</dbReference>
<dbReference type="NCBIfam" id="TIGR00874">
    <property type="entry name" value="talAB"/>
    <property type="match status" value="1"/>
</dbReference>
<dbReference type="PANTHER" id="PTHR10683">
    <property type="entry name" value="TRANSALDOLASE"/>
    <property type="match status" value="1"/>
</dbReference>
<dbReference type="PANTHER" id="PTHR10683:SF18">
    <property type="entry name" value="TRANSALDOLASE"/>
    <property type="match status" value="1"/>
</dbReference>
<dbReference type="Pfam" id="PF00923">
    <property type="entry name" value="TAL_FSA"/>
    <property type="match status" value="1"/>
</dbReference>
<dbReference type="SUPFAM" id="SSF51569">
    <property type="entry name" value="Aldolase"/>
    <property type="match status" value="1"/>
</dbReference>
<dbReference type="PROSITE" id="PS01054">
    <property type="entry name" value="TRANSALDOLASE_1"/>
    <property type="match status" value="1"/>
</dbReference>
<dbReference type="PROSITE" id="PS00958">
    <property type="entry name" value="TRANSALDOLASE_2"/>
    <property type="match status" value="1"/>
</dbReference>
<evidence type="ECO:0000255" key="1">
    <source>
        <dbReference type="HAMAP-Rule" id="MF_00492"/>
    </source>
</evidence>
<evidence type="ECO:0000305" key="2"/>
<proteinExistence type="inferred from homology"/>
<gene>
    <name evidence="1" type="primary">tal</name>
    <name type="ordered locus">Ava_0493</name>
</gene>
<sequence>MTKNLLEQLREMTVVVADTGDIQAIEKFTPRDATTNPSLITAAAKMPEYQEIVDQTLLQAKKDAGAGASKGQIVSLAFDRLAVSFGLKILQIIPGRVSTEVDARLSYDTEATITKARELIAQYKAAGIGPERVLIKIASTWEGIKAAEILEKEGIHCNLTLLFGLHQAIACAEAGITLISPFVGRILDWYKKETGRDSYPSAEDPGVISVTTIYNYYKKFGYTTEVMGASFRNIGEITELAGSDLLTISPGLLGELQATIGELPRKLDPAKAATLDIEKISIDKATFDKMHAADRMAYDKLDEGIKGFTKALEELETLLAERLARLEVVASH</sequence>
<name>TAL_TRIV2</name>
<reference key="1">
    <citation type="journal article" date="1996" name="Plant Mol. Biol.">
        <title>Transaldolase genes from the cyanobacteria Anabaena variabilis and Synechocystis sp. PCC 6803: comparison with other eubacterial and eukaryotic homologues.</title>
        <authorList>
            <person name="Koehler U."/>
            <person name="Cerff R."/>
            <person name="Brinkmann H."/>
        </authorList>
    </citation>
    <scope>NUCLEOTIDE SEQUENCE [GENOMIC DNA]</scope>
</reference>
<reference key="2">
    <citation type="journal article" date="2014" name="Stand. Genomic Sci.">
        <title>Complete genome sequence of Anabaena variabilis ATCC 29413.</title>
        <authorList>
            <person name="Thiel T."/>
            <person name="Pratte B.S."/>
            <person name="Zhong J."/>
            <person name="Goodwin L."/>
            <person name="Copeland A."/>
            <person name="Lucas S."/>
            <person name="Han C."/>
            <person name="Pitluck S."/>
            <person name="Land M.L."/>
            <person name="Kyrpides N.C."/>
            <person name="Woyke T."/>
        </authorList>
    </citation>
    <scope>NUCLEOTIDE SEQUENCE [LARGE SCALE GENOMIC DNA]</scope>
    <source>
        <strain>ATCC 29413 / PCC 7937</strain>
    </source>
</reference>
<accession>P51778</accession>
<accession>Q3MFW9</accession>